<name>YHBI_BACSU</name>
<reference key="1">
    <citation type="journal article" date="1997" name="Nature">
        <title>The complete genome sequence of the Gram-positive bacterium Bacillus subtilis.</title>
        <authorList>
            <person name="Kunst F."/>
            <person name="Ogasawara N."/>
            <person name="Moszer I."/>
            <person name="Albertini A.M."/>
            <person name="Alloni G."/>
            <person name="Azevedo V."/>
            <person name="Bertero M.G."/>
            <person name="Bessieres P."/>
            <person name="Bolotin A."/>
            <person name="Borchert S."/>
            <person name="Borriss R."/>
            <person name="Boursier L."/>
            <person name="Brans A."/>
            <person name="Braun M."/>
            <person name="Brignell S.C."/>
            <person name="Bron S."/>
            <person name="Brouillet S."/>
            <person name="Bruschi C.V."/>
            <person name="Caldwell B."/>
            <person name="Capuano V."/>
            <person name="Carter N.M."/>
            <person name="Choi S.-K."/>
            <person name="Codani J.-J."/>
            <person name="Connerton I.F."/>
            <person name="Cummings N.J."/>
            <person name="Daniel R.A."/>
            <person name="Denizot F."/>
            <person name="Devine K.M."/>
            <person name="Duesterhoeft A."/>
            <person name="Ehrlich S.D."/>
            <person name="Emmerson P.T."/>
            <person name="Entian K.-D."/>
            <person name="Errington J."/>
            <person name="Fabret C."/>
            <person name="Ferrari E."/>
            <person name="Foulger D."/>
            <person name="Fritz C."/>
            <person name="Fujita M."/>
            <person name="Fujita Y."/>
            <person name="Fuma S."/>
            <person name="Galizzi A."/>
            <person name="Galleron N."/>
            <person name="Ghim S.-Y."/>
            <person name="Glaser P."/>
            <person name="Goffeau A."/>
            <person name="Golightly E.J."/>
            <person name="Grandi G."/>
            <person name="Guiseppi G."/>
            <person name="Guy B.J."/>
            <person name="Haga K."/>
            <person name="Haiech J."/>
            <person name="Harwood C.R."/>
            <person name="Henaut A."/>
            <person name="Hilbert H."/>
            <person name="Holsappel S."/>
            <person name="Hosono S."/>
            <person name="Hullo M.-F."/>
            <person name="Itaya M."/>
            <person name="Jones L.-M."/>
            <person name="Joris B."/>
            <person name="Karamata D."/>
            <person name="Kasahara Y."/>
            <person name="Klaerr-Blanchard M."/>
            <person name="Klein C."/>
            <person name="Kobayashi Y."/>
            <person name="Koetter P."/>
            <person name="Koningstein G."/>
            <person name="Krogh S."/>
            <person name="Kumano M."/>
            <person name="Kurita K."/>
            <person name="Lapidus A."/>
            <person name="Lardinois S."/>
            <person name="Lauber J."/>
            <person name="Lazarevic V."/>
            <person name="Lee S.-M."/>
            <person name="Levine A."/>
            <person name="Liu H."/>
            <person name="Masuda S."/>
            <person name="Mauel C."/>
            <person name="Medigue C."/>
            <person name="Medina N."/>
            <person name="Mellado R.P."/>
            <person name="Mizuno M."/>
            <person name="Moestl D."/>
            <person name="Nakai S."/>
            <person name="Noback M."/>
            <person name="Noone D."/>
            <person name="O'Reilly M."/>
            <person name="Ogawa K."/>
            <person name="Ogiwara A."/>
            <person name="Oudega B."/>
            <person name="Park S.-H."/>
            <person name="Parro V."/>
            <person name="Pohl T.M."/>
            <person name="Portetelle D."/>
            <person name="Porwollik S."/>
            <person name="Prescott A.M."/>
            <person name="Presecan E."/>
            <person name="Pujic P."/>
            <person name="Purnelle B."/>
            <person name="Rapoport G."/>
            <person name="Rey M."/>
            <person name="Reynolds S."/>
            <person name="Rieger M."/>
            <person name="Rivolta C."/>
            <person name="Rocha E."/>
            <person name="Roche B."/>
            <person name="Rose M."/>
            <person name="Sadaie Y."/>
            <person name="Sato T."/>
            <person name="Scanlan E."/>
            <person name="Schleich S."/>
            <person name="Schroeter R."/>
            <person name="Scoffone F."/>
            <person name="Sekiguchi J."/>
            <person name="Sekowska A."/>
            <person name="Seror S.J."/>
            <person name="Serror P."/>
            <person name="Shin B.-S."/>
            <person name="Soldo B."/>
            <person name="Sorokin A."/>
            <person name="Tacconi E."/>
            <person name="Takagi T."/>
            <person name="Takahashi H."/>
            <person name="Takemaru K."/>
            <person name="Takeuchi M."/>
            <person name="Tamakoshi A."/>
            <person name="Tanaka T."/>
            <person name="Terpstra P."/>
            <person name="Tognoni A."/>
            <person name="Tosato V."/>
            <person name="Uchiyama S."/>
            <person name="Vandenbol M."/>
            <person name="Vannier F."/>
            <person name="Vassarotti A."/>
            <person name="Viari A."/>
            <person name="Wambutt R."/>
            <person name="Wedler E."/>
            <person name="Wedler H."/>
            <person name="Weitzenegger T."/>
            <person name="Winters P."/>
            <person name="Wipat A."/>
            <person name="Yamamoto H."/>
            <person name="Yamane K."/>
            <person name="Yasumoto K."/>
            <person name="Yata K."/>
            <person name="Yoshida K."/>
            <person name="Yoshikawa H.-F."/>
            <person name="Zumstein E."/>
            <person name="Yoshikawa H."/>
            <person name="Danchin A."/>
        </authorList>
    </citation>
    <scope>NUCLEOTIDE SEQUENCE [LARGE SCALE GENOMIC DNA]</scope>
    <source>
        <strain>168</strain>
    </source>
</reference>
<feature type="chain" id="PRO_0000360561" description="Uncharacterized HTH-type transcriptional regulator YhbI">
    <location>
        <begin position="1"/>
        <end position="154"/>
    </location>
</feature>
<feature type="domain" description="HTH marR-type" evidence="1">
    <location>
        <begin position="1"/>
        <end position="143"/>
    </location>
</feature>
<feature type="DNA-binding region" description="H-T-H motif" evidence="1">
    <location>
        <begin position="57"/>
        <end position="80"/>
    </location>
</feature>
<protein>
    <recommendedName>
        <fullName>Uncharacterized HTH-type transcriptional regulator YhbI</fullName>
    </recommendedName>
</protein>
<sequence length="154" mass="17602">MTESERALLTFEQLFDTSRAIYKKQKKILEIVLEPFDITVLQYLLMFKIHQSGSTPLSKLAMSLDLKPASVTRMTDILYKRQLMNRYDSPDDRRIVMIQLTEEGEELIEKAAVQYAKMGAGLYQKLDTSQLQYLRKLAGSLTKLAEGCSEKSGN</sequence>
<dbReference type="EMBL" id="AL009126">
    <property type="protein sequence ID" value="CAB12727.1"/>
    <property type="molecule type" value="Genomic_DNA"/>
</dbReference>
<dbReference type="PIR" id="C69821">
    <property type="entry name" value="C69821"/>
</dbReference>
<dbReference type="RefSeq" id="NP_388780.1">
    <property type="nucleotide sequence ID" value="NC_000964.3"/>
</dbReference>
<dbReference type="RefSeq" id="WP_003233431.1">
    <property type="nucleotide sequence ID" value="NZ_OZ025638.1"/>
</dbReference>
<dbReference type="SMR" id="O31592"/>
<dbReference type="FunCoup" id="O31592">
    <property type="interactions" value="26"/>
</dbReference>
<dbReference type="STRING" id="224308.BSU08990"/>
<dbReference type="PaxDb" id="224308-BSU08990"/>
<dbReference type="EnsemblBacteria" id="CAB12727">
    <property type="protein sequence ID" value="CAB12727"/>
    <property type="gene ID" value="BSU_08990"/>
</dbReference>
<dbReference type="GeneID" id="939247"/>
<dbReference type="KEGG" id="bsu:BSU08990"/>
<dbReference type="PATRIC" id="fig|224308.179.peg.972"/>
<dbReference type="eggNOG" id="COG1846">
    <property type="taxonomic scope" value="Bacteria"/>
</dbReference>
<dbReference type="InParanoid" id="O31592"/>
<dbReference type="OrthoDB" id="2608936at2"/>
<dbReference type="PhylomeDB" id="O31592"/>
<dbReference type="BioCyc" id="BSUB:BSU08990-MONOMER"/>
<dbReference type="Proteomes" id="UP000001570">
    <property type="component" value="Chromosome"/>
</dbReference>
<dbReference type="GO" id="GO:0003677">
    <property type="term" value="F:DNA binding"/>
    <property type="evidence" value="ECO:0007669"/>
    <property type="project" value="UniProtKB-KW"/>
</dbReference>
<dbReference type="GO" id="GO:0003700">
    <property type="term" value="F:DNA-binding transcription factor activity"/>
    <property type="evidence" value="ECO:0007669"/>
    <property type="project" value="InterPro"/>
</dbReference>
<dbReference type="GO" id="GO:0006355">
    <property type="term" value="P:regulation of DNA-templated transcription"/>
    <property type="evidence" value="ECO:0000318"/>
    <property type="project" value="GO_Central"/>
</dbReference>
<dbReference type="GO" id="GO:0006950">
    <property type="term" value="P:response to stress"/>
    <property type="evidence" value="ECO:0000318"/>
    <property type="project" value="GO_Central"/>
</dbReference>
<dbReference type="Gene3D" id="1.10.10.10">
    <property type="entry name" value="Winged helix-like DNA-binding domain superfamily/Winged helix DNA-binding domain"/>
    <property type="match status" value="1"/>
</dbReference>
<dbReference type="InterPro" id="IPR000835">
    <property type="entry name" value="HTH_MarR-typ"/>
</dbReference>
<dbReference type="InterPro" id="IPR039422">
    <property type="entry name" value="MarR/SlyA-like"/>
</dbReference>
<dbReference type="InterPro" id="IPR036388">
    <property type="entry name" value="WH-like_DNA-bd_sf"/>
</dbReference>
<dbReference type="InterPro" id="IPR036390">
    <property type="entry name" value="WH_DNA-bd_sf"/>
</dbReference>
<dbReference type="PANTHER" id="PTHR33164:SF99">
    <property type="entry name" value="MARR FAMILY REGULATORY PROTEIN"/>
    <property type="match status" value="1"/>
</dbReference>
<dbReference type="PANTHER" id="PTHR33164">
    <property type="entry name" value="TRANSCRIPTIONAL REGULATOR, MARR FAMILY"/>
    <property type="match status" value="1"/>
</dbReference>
<dbReference type="Pfam" id="PF01047">
    <property type="entry name" value="MarR"/>
    <property type="match status" value="1"/>
</dbReference>
<dbReference type="PRINTS" id="PR00598">
    <property type="entry name" value="HTHMARR"/>
</dbReference>
<dbReference type="SMART" id="SM00347">
    <property type="entry name" value="HTH_MARR"/>
    <property type="match status" value="1"/>
</dbReference>
<dbReference type="SUPFAM" id="SSF46785">
    <property type="entry name" value="Winged helix' DNA-binding domain"/>
    <property type="match status" value="1"/>
</dbReference>
<dbReference type="PROSITE" id="PS50995">
    <property type="entry name" value="HTH_MARR_2"/>
    <property type="match status" value="1"/>
</dbReference>
<keyword id="KW-0238">DNA-binding</keyword>
<keyword id="KW-1185">Reference proteome</keyword>
<keyword id="KW-0804">Transcription</keyword>
<keyword id="KW-0805">Transcription regulation</keyword>
<evidence type="ECO:0000255" key="1">
    <source>
        <dbReference type="PROSITE-ProRule" id="PRU00345"/>
    </source>
</evidence>
<organism>
    <name type="scientific">Bacillus subtilis (strain 168)</name>
    <dbReference type="NCBI Taxonomy" id="224308"/>
    <lineage>
        <taxon>Bacteria</taxon>
        <taxon>Bacillati</taxon>
        <taxon>Bacillota</taxon>
        <taxon>Bacilli</taxon>
        <taxon>Bacillales</taxon>
        <taxon>Bacillaceae</taxon>
        <taxon>Bacillus</taxon>
    </lineage>
</organism>
<accession>O31592</accession>
<gene>
    <name type="primary">yhbI</name>
    <name type="ordered locus">BSU08990</name>
</gene>
<proteinExistence type="predicted"/>